<accession>Q1R0H9</accession>
<name>RS7_CHRSD</name>
<organism>
    <name type="scientific">Chromohalobacter salexigens (strain ATCC BAA-138 / DSM 3043 / CIP 106854 / NCIMB 13768 / 1H11)</name>
    <dbReference type="NCBI Taxonomy" id="290398"/>
    <lineage>
        <taxon>Bacteria</taxon>
        <taxon>Pseudomonadati</taxon>
        <taxon>Pseudomonadota</taxon>
        <taxon>Gammaproteobacteria</taxon>
        <taxon>Oceanospirillales</taxon>
        <taxon>Halomonadaceae</taxon>
        <taxon>Chromohalobacter</taxon>
    </lineage>
</organism>
<reference key="1">
    <citation type="journal article" date="2011" name="Stand. Genomic Sci.">
        <title>Complete genome sequence of the halophilic and highly halotolerant Chromohalobacter salexigens type strain (1H11(T)).</title>
        <authorList>
            <person name="Copeland A."/>
            <person name="O'Connor K."/>
            <person name="Lucas S."/>
            <person name="Lapidus A."/>
            <person name="Berry K.W."/>
            <person name="Detter J.C."/>
            <person name="Del Rio T.G."/>
            <person name="Hammon N."/>
            <person name="Dalin E."/>
            <person name="Tice H."/>
            <person name="Pitluck S."/>
            <person name="Bruce D."/>
            <person name="Goodwin L."/>
            <person name="Han C."/>
            <person name="Tapia R."/>
            <person name="Saunders E."/>
            <person name="Schmutz J."/>
            <person name="Brettin T."/>
            <person name="Larimer F."/>
            <person name="Land M."/>
            <person name="Hauser L."/>
            <person name="Vargas C."/>
            <person name="Nieto J.J."/>
            <person name="Kyrpides N.C."/>
            <person name="Ivanova N."/>
            <person name="Goker M."/>
            <person name="Klenk H.P."/>
            <person name="Csonka L.N."/>
            <person name="Woyke T."/>
        </authorList>
    </citation>
    <scope>NUCLEOTIDE SEQUENCE [LARGE SCALE GENOMIC DNA]</scope>
    <source>
        <strain>ATCC BAA-138 / DSM 3043 / CIP 106854 / NCIMB 13768 / 1H11</strain>
    </source>
</reference>
<protein>
    <recommendedName>
        <fullName evidence="1">Small ribosomal subunit protein uS7</fullName>
    </recommendedName>
    <alternativeName>
        <fullName evidence="2">30S ribosomal protein S7</fullName>
    </alternativeName>
</protein>
<keyword id="KW-1185">Reference proteome</keyword>
<keyword id="KW-0687">Ribonucleoprotein</keyword>
<keyword id="KW-0689">Ribosomal protein</keyword>
<keyword id="KW-0694">RNA-binding</keyword>
<keyword id="KW-0699">rRNA-binding</keyword>
<keyword id="KW-0820">tRNA-binding</keyword>
<gene>
    <name evidence="1" type="primary">rpsG</name>
    <name type="ordered locus">Csal_0417</name>
</gene>
<proteinExistence type="inferred from homology"/>
<feature type="chain" id="PRO_1000014172" description="Small ribosomal subunit protein uS7">
    <location>
        <begin position="1"/>
        <end position="156"/>
    </location>
</feature>
<evidence type="ECO:0000255" key="1">
    <source>
        <dbReference type="HAMAP-Rule" id="MF_00480"/>
    </source>
</evidence>
<evidence type="ECO:0000305" key="2"/>
<comment type="function">
    <text evidence="1">One of the primary rRNA binding proteins, it binds directly to 16S rRNA where it nucleates assembly of the head domain of the 30S subunit. Is located at the subunit interface close to the decoding center, probably blocks exit of the E-site tRNA.</text>
</comment>
<comment type="subunit">
    <text evidence="1">Part of the 30S ribosomal subunit. Contacts proteins S9 and S11.</text>
</comment>
<comment type="similarity">
    <text evidence="1">Belongs to the universal ribosomal protein uS7 family.</text>
</comment>
<sequence>MPRRKVVAKREILPDPKFGSERLAKFMNHLMVSGKKSVAERIVYGALDKVAERSKDEPLEIFDKALETIQPMVEVKSRRVGGATYQVPVEVRPSRRQALAMRWLVDAARSRGEKTMVQRLAGEMLDAAEGKGAAVKKREDVHRMADANKAFSHYRF</sequence>
<dbReference type="EMBL" id="CP000285">
    <property type="protein sequence ID" value="ABE57779.1"/>
    <property type="molecule type" value="Genomic_DNA"/>
</dbReference>
<dbReference type="RefSeq" id="WP_011505725.1">
    <property type="nucleotide sequence ID" value="NC_007963.1"/>
</dbReference>
<dbReference type="SMR" id="Q1R0H9"/>
<dbReference type="STRING" id="290398.Csal_0417"/>
<dbReference type="GeneID" id="95333170"/>
<dbReference type="KEGG" id="csa:Csal_0417"/>
<dbReference type="eggNOG" id="COG0049">
    <property type="taxonomic scope" value="Bacteria"/>
</dbReference>
<dbReference type="HOGENOM" id="CLU_072226_1_1_6"/>
<dbReference type="OrthoDB" id="9807653at2"/>
<dbReference type="Proteomes" id="UP000000239">
    <property type="component" value="Chromosome"/>
</dbReference>
<dbReference type="GO" id="GO:0015935">
    <property type="term" value="C:small ribosomal subunit"/>
    <property type="evidence" value="ECO:0007669"/>
    <property type="project" value="InterPro"/>
</dbReference>
<dbReference type="GO" id="GO:0019843">
    <property type="term" value="F:rRNA binding"/>
    <property type="evidence" value="ECO:0007669"/>
    <property type="project" value="UniProtKB-UniRule"/>
</dbReference>
<dbReference type="GO" id="GO:0003735">
    <property type="term" value="F:structural constituent of ribosome"/>
    <property type="evidence" value="ECO:0007669"/>
    <property type="project" value="InterPro"/>
</dbReference>
<dbReference type="GO" id="GO:0000049">
    <property type="term" value="F:tRNA binding"/>
    <property type="evidence" value="ECO:0007669"/>
    <property type="project" value="UniProtKB-UniRule"/>
</dbReference>
<dbReference type="GO" id="GO:0006412">
    <property type="term" value="P:translation"/>
    <property type="evidence" value="ECO:0007669"/>
    <property type="project" value="UniProtKB-UniRule"/>
</dbReference>
<dbReference type="CDD" id="cd14869">
    <property type="entry name" value="uS7_Bacteria"/>
    <property type="match status" value="1"/>
</dbReference>
<dbReference type="FunFam" id="1.10.455.10:FF:000001">
    <property type="entry name" value="30S ribosomal protein S7"/>
    <property type="match status" value="1"/>
</dbReference>
<dbReference type="Gene3D" id="1.10.455.10">
    <property type="entry name" value="Ribosomal protein S7 domain"/>
    <property type="match status" value="1"/>
</dbReference>
<dbReference type="HAMAP" id="MF_00480_B">
    <property type="entry name" value="Ribosomal_uS7_B"/>
    <property type="match status" value="1"/>
</dbReference>
<dbReference type="InterPro" id="IPR000235">
    <property type="entry name" value="Ribosomal_uS7"/>
</dbReference>
<dbReference type="InterPro" id="IPR005717">
    <property type="entry name" value="Ribosomal_uS7_bac/org-type"/>
</dbReference>
<dbReference type="InterPro" id="IPR023798">
    <property type="entry name" value="Ribosomal_uS7_dom"/>
</dbReference>
<dbReference type="InterPro" id="IPR036823">
    <property type="entry name" value="Ribosomal_uS7_dom_sf"/>
</dbReference>
<dbReference type="NCBIfam" id="TIGR01029">
    <property type="entry name" value="rpsG_bact"/>
    <property type="match status" value="1"/>
</dbReference>
<dbReference type="PANTHER" id="PTHR11205">
    <property type="entry name" value="RIBOSOMAL PROTEIN S7"/>
    <property type="match status" value="1"/>
</dbReference>
<dbReference type="Pfam" id="PF00177">
    <property type="entry name" value="Ribosomal_S7"/>
    <property type="match status" value="1"/>
</dbReference>
<dbReference type="PIRSF" id="PIRSF002122">
    <property type="entry name" value="RPS7p_RPS7a_RPS5e_RPS7o"/>
    <property type="match status" value="1"/>
</dbReference>
<dbReference type="SUPFAM" id="SSF47973">
    <property type="entry name" value="Ribosomal protein S7"/>
    <property type="match status" value="1"/>
</dbReference>